<name>LBD27_ARATH</name>
<feature type="chain" id="PRO_0000132278" description="LOB domain-containing protein 27">
    <location>
        <begin position="1"/>
        <end position="328"/>
    </location>
</feature>
<feature type="domain" description="LOB" evidence="1">
    <location>
        <begin position="35"/>
        <end position="136"/>
    </location>
</feature>
<dbReference type="EMBL" id="AB473862">
    <property type="protein sequence ID" value="BAH10573.1"/>
    <property type="molecule type" value="mRNA"/>
</dbReference>
<dbReference type="EMBL" id="AL049746">
    <property type="protein sequence ID" value="CAB41870.1"/>
    <property type="molecule type" value="Genomic_DNA"/>
</dbReference>
<dbReference type="EMBL" id="CP002686">
    <property type="protein sequence ID" value="AEE78342.1"/>
    <property type="molecule type" value="Genomic_DNA"/>
</dbReference>
<dbReference type="PIR" id="T07726">
    <property type="entry name" value="T07726"/>
</dbReference>
<dbReference type="RefSeq" id="NP_190371.1">
    <property type="nucleotide sequence ID" value="NM_114657.6"/>
</dbReference>
<dbReference type="SMR" id="Q9STS6"/>
<dbReference type="BioGRID" id="9263">
    <property type="interactions" value="13"/>
</dbReference>
<dbReference type="IntAct" id="Q9STS6">
    <property type="interactions" value="9"/>
</dbReference>
<dbReference type="STRING" id="3702.Q9STS6"/>
<dbReference type="PaxDb" id="3702-AT3G47870.1"/>
<dbReference type="EnsemblPlants" id="AT3G47870.1">
    <property type="protein sequence ID" value="AT3G47870.1"/>
    <property type="gene ID" value="AT3G47870"/>
</dbReference>
<dbReference type="GeneID" id="823943"/>
<dbReference type="Gramene" id="AT3G47870.1">
    <property type="protein sequence ID" value="AT3G47870.1"/>
    <property type="gene ID" value="AT3G47870"/>
</dbReference>
<dbReference type="KEGG" id="ath:AT3G47870"/>
<dbReference type="Araport" id="AT3G47870"/>
<dbReference type="TAIR" id="AT3G47870">
    <property type="gene designation" value="LBD27"/>
</dbReference>
<dbReference type="eggNOG" id="ENOG502QTUX">
    <property type="taxonomic scope" value="Eukaryota"/>
</dbReference>
<dbReference type="HOGENOM" id="CLU_073711_1_0_1"/>
<dbReference type="InParanoid" id="Q9STS6"/>
<dbReference type="OMA" id="RNGQNHP"/>
<dbReference type="PhylomeDB" id="Q9STS6"/>
<dbReference type="PRO" id="PR:Q9STS6"/>
<dbReference type="Proteomes" id="UP000006548">
    <property type="component" value="Chromosome 3"/>
</dbReference>
<dbReference type="ExpressionAtlas" id="Q9STS6">
    <property type="expression patterns" value="baseline and differential"/>
</dbReference>
<dbReference type="GO" id="GO:0005634">
    <property type="term" value="C:nucleus"/>
    <property type="evidence" value="ECO:0000314"/>
    <property type="project" value="TAIR"/>
</dbReference>
<dbReference type="GO" id="GO:0009556">
    <property type="term" value="P:microsporogenesis"/>
    <property type="evidence" value="ECO:0000315"/>
    <property type="project" value="TAIR"/>
</dbReference>
<dbReference type="GO" id="GO:0009555">
    <property type="term" value="P:pollen development"/>
    <property type="evidence" value="ECO:0000315"/>
    <property type="project" value="TAIR"/>
</dbReference>
<dbReference type="GO" id="GO:0009786">
    <property type="term" value="P:regulation of asymmetric cell division"/>
    <property type="evidence" value="ECO:0000315"/>
    <property type="project" value="TAIR"/>
</dbReference>
<dbReference type="InterPro" id="IPR004883">
    <property type="entry name" value="LOB"/>
</dbReference>
<dbReference type="PANTHER" id="PTHR31301:SF21">
    <property type="entry name" value="LOB DOMAIN-CONTAINING PROTEIN 27-RELATED"/>
    <property type="match status" value="1"/>
</dbReference>
<dbReference type="PANTHER" id="PTHR31301">
    <property type="entry name" value="LOB DOMAIN-CONTAINING PROTEIN 4-RELATED"/>
    <property type="match status" value="1"/>
</dbReference>
<dbReference type="Pfam" id="PF03195">
    <property type="entry name" value="LOB"/>
    <property type="match status" value="1"/>
</dbReference>
<dbReference type="PROSITE" id="PS50891">
    <property type="entry name" value="LOB"/>
    <property type="match status" value="1"/>
</dbReference>
<organism>
    <name type="scientific">Arabidopsis thaliana</name>
    <name type="common">Mouse-ear cress</name>
    <dbReference type="NCBI Taxonomy" id="3702"/>
    <lineage>
        <taxon>Eukaryota</taxon>
        <taxon>Viridiplantae</taxon>
        <taxon>Streptophyta</taxon>
        <taxon>Embryophyta</taxon>
        <taxon>Tracheophyta</taxon>
        <taxon>Spermatophyta</taxon>
        <taxon>Magnoliopsida</taxon>
        <taxon>eudicotyledons</taxon>
        <taxon>Gunneridae</taxon>
        <taxon>Pentapetalae</taxon>
        <taxon>rosids</taxon>
        <taxon>malvids</taxon>
        <taxon>Brassicales</taxon>
        <taxon>Brassicaceae</taxon>
        <taxon>Camelineae</taxon>
        <taxon>Arabidopsis</taxon>
    </lineage>
</organism>
<gene>
    <name type="primary">LBD27</name>
    <name type="synonym">ASL29</name>
    <name type="ordered locus">At3g47870</name>
    <name type="ORF">T23J7.200</name>
</gene>
<proteinExistence type="evidence at protein level"/>
<comment type="interaction">
    <interactant intactId="EBI-15209584">
        <id>Q9STS6</id>
    </interactant>
    <interactant intactId="EBI-541351">
        <id>Q39237</id>
        <label>TGA1</label>
    </interactant>
    <organismsDiffer>false</organismsDiffer>
    <experiments>3</experiments>
</comment>
<comment type="similarity">
    <text evidence="2">Belongs to the LOB domain-containing protein family.</text>
</comment>
<reference key="1">
    <citation type="journal article" date="2009" name="Plant J.">
        <title>Characterization of genes in the ASYMMETRIC LEAVES2/LATERAL ORGAN BOUNDARIES (AS2/LOB) family in Arabidopsis thaliana, and functional and molecular comparisons between AS2 and other family members.</title>
        <authorList>
            <person name="Matsumura Y."/>
            <person name="Iwakawa H."/>
            <person name="Machida Y."/>
            <person name="Machida C."/>
        </authorList>
    </citation>
    <scope>NUCLEOTIDE SEQUENCE [MRNA]</scope>
    <source>
        <strain>cv. Columbia</strain>
    </source>
</reference>
<reference key="2">
    <citation type="journal article" date="2000" name="Nature">
        <title>Sequence and analysis of chromosome 3 of the plant Arabidopsis thaliana.</title>
        <authorList>
            <person name="Salanoubat M."/>
            <person name="Lemcke K."/>
            <person name="Rieger M."/>
            <person name="Ansorge W."/>
            <person name="Unseld M."/>
            <person name="Fartmann B."/>
            <person name="Valle G."/>
            <person name="Bloecker H."/>
            <person name="Perez-Alonso M."/>
            <person name="Obermaier B."/>
            <person name="Delseny M."/>
            <person name="Boutry M."/>
            <person name="Grivell L.A."/>
            <person name="Mache R."/>
            <person name="Puigdomenech P."/>
            <person name="De Simone V."/>
            <person name="Choisne N."/>
            <person name="Artiguenave F."/>
            <person name="Robert C."/>
            <person name="Brottier P."/>
            <person name="Wincker P."/>
            <person name="Cattolico L."/>
            <person name="Weissenbach J."/>
            <person name="Saurin W."/>
            <person name="Quetier F."/>
            <person name="Schaefer M."/>
            <person name="Mueller-Auer S."/>
            <person name="Gabel C."/>
            <person name="Fuchs M."/>
            <person name="Benes V."/>
            <person name="Wurmbach E."/>
            <person name="Drzonek H."/>
            <person name="Erfle H."/>
            <person name="Jordan N."/>
            <person name="Bangert S."/>
            <person name="Wiedelmann R."/>
            <person name="Kranz H."/>
            <person name="Voss H."/>
            <person name="Holland R."/>
            <person name="Brandt P."/>
            <person name="Nyakatura G."/>
            <person name="Vezzi A."/>
            <person name="D'Angelo M."/>
            <person name="Pallavicini A."/>
            <person name="Toppo S."/>
            <person name="Simionati B."/>
            <person name="Conrad A."/>
            <person name="Hornischer K."/>
            <person name="Kauer G."/>
            <person name="Loehnert T.-H."/>
            <person name="Nordsiek G."/>
            <person name="Reichelt J."/>
            <person name="Scharfe M."/>
            <person name="Schoen O."/>
            <person name="Bargues M."/>
            <person name="Terol J."/>
            <person name="Climent J."/>
            <person name="Navarro P."/>
            <person name="Collado C."/>
            <person name="Perez-Perez A."/>
            <person name="Ottenwaelder B."/>
            <person name="Duchemin D."/>
            <person name="Cooke R."/>
            <person name="Laudie M."/>
            <person name="Berger-Llauro C."/>
            <person name="Purnelle B."/>
            <person name="Masuy D."/>
            <person name="de Haan M."/>
            <person name="Maarse A.C."/>
            <person name="Alcaraz J.-P."/>
            <person name="Cottet A."/>
            <person name="Casacuberta E."/>
            <person name="Monfort A."/>
            <person name="Argiriou A."/>
            <person name="Flores M."/>
            <person name="Liguori R."/>
            <person name="Vitale D."/>
            <person name="Mannhaupt G."/>
            <person name="Haase D."/>
            <person name="Schoof H."/>
            <person name="Rudd S."/>
            <person name="Zaccaria P."/>
            <person name="Mewes H.-W."/>
            <person name="Mayer K.F.X."/>
            <person name="Kaul S."/>
            <person name="Town C.D."/>
            <person name="Koo H.L."/>
            <person name="Tallon L.J."/>
            <person name="Jenkins J."/>
            <person name="Rooney T."/>
            <person name="Rizzo M."/>
            <person name="Walts A."/>
            <person name="Utterback T."/>
            <person name="Fujii C.Y."/>
            <person name="Shea T.P."/>
            <person name="Creasy T.H."/>
            <person name="Haas B."/>
            <person name="Maiti R."/>
            <person name="Wu D."/>
            <person name="Peterson J."/>
            <person name="Van Aken S."/>
            <person name="Pai G."/>
            <person name="Militscher J."/>
            <person name="Sellers P."/>
            <person name="Gill J.E."/>
            <person name="Feldblyum T.V."/>
            <person name="Preuss D."/>
            <person name="Lin X."/>
            <person name="Nierman W.C."/>
            <person name="Salzberg S.L."/>
            <person name="White O."/>
            <person name="Venter J.C."/>
            <person name="Fraser C.M."/>
            <person name="Kaneko T."/>
            <person name="Nakamura Y."/>
            <person name="Sato S."/>
            <person name="Kato T."/>
            <person name="Asamizu E."/>
            <person name="Sasamoto S."/>
            <person name="Kimura T."/>
            <person name="Idesawa K."/>
            <person name="Kawashima K."/>
            <person name="Kishida Y."/>
            <person name="Kiyokawa C."/>
            <person name="Kohara M."/>
            <person name="Matsumoto M."/>
            <person name="Matsuno A."/>
            <person name="Muraki A."/>
            <person name="Nakayama S."/>
            <person name="Nakazaki N."/>
            <person name="Shinpo S."/>
            <person name="Takeuchi C."/>
            <person name="Wada T."/>
            <person name="Watanabe A."/>
            <person name="Yamada M."/>
            <person name="Yasuda M."/>
            <person name="Tabata S."/>
        </authorList>
    </citation>
    <scope>NUCLEOTIDE SEQUENCE [LARGE SCALE GENOMIC DNA]</scope>
    <source>
        <strain>cv. Columbia</strain>
    </source>
</reference>
<reference key="3">
    <citation type="journal article" date="2017" name="Plant J.">
        <title>Araport11: a complete reannotation of the Arabidopsis thaliana reference genome.</title>
        <authorList>
            <person name="Cheng C.Y."/>
            <person name="Krishnakumar V."/>
            <person name="Chan A.P."/>
            <person name="Thibaud-Nissen F."/>
            <person name="Schobel S."/>
            <person name="Town C.D."/>
        </authorList>
    </citation>
    <scope>GENOME REANNOTATION</scope>
    <source>
        <strain>cv. Columbia</strain>
    </source>
</reference>
<reference key="4">
    <citation type="journal article" date="2002" name="Plant Physiol.">
        <title>The LATERAL ORGAN BOUNDARIES gene defines a novel, plant-specific gene family.</title>
        <authorList>
            <person name="Shuai B."/>
            <person name="Reynaga-Pena C.G."/>
            <person name="Springer P.S."/>
        </authorList>
    </citation>
    <scope>GENE FAMILY</scope>
    <scope>NOMENCLATURE</scope>
</reference>
<reference key="5">
    <citation type="journal article" date="2002" name="Plant Cell Physiol.">
        <title>The ASYMMETRIC LEAVES2 gene of Arabidopsis thaliana, required for formation of a symmetric flat leaf lamina, encodes a member of a novel family of proteins characterized by cysteine repeats and a leucine zipper.</title>
        <authorList>
            <person name="Iwakawa H."/>
            <person name="Ueno Y."/>
            <person name="Semiarti E."/>
            <person name="Onouchi H."/>
            <person name="Kojima S."/>
            <person name="Tsukaya H."/>
            <person name="Hasebe M."/>
            <person name="Soma T."/>
            <person name="Ikezaki M."/>
            <person name="Machida C."/>
            <person name="Machida Y."/>
        </authorList>
    </citation>
    <scope>GENE FAMILY</scope>
    <scope>NOMENCLATURE</scope>
</reference>
<keyword id="KW-1185">Reference proteome</keyword>
<protein>
    <recommendedName>
        <fullName>LOB domain-containing protein 27</fullName>
    </recommendedName>
    <alternativeName>
        <fullName>ASYMMETRIC LEAVES 2-like protein 29</fullName>
        <shortName>AS2-like protein 29</shortName>
    </alternativeName>
</protein>
<sequence>MSNTKHIHKGLQERLLDLLLIALIVYMTLKGGTSGACAACKYQRRRCAADCPLAPYFPAEQPKLFQNVHRLFGVRSIVKILEKLDETQKPEAMKSIIFQSYVRDRSPVHGCLGVTQQLQYMIWFAEEELKAVNSQLQLYRSQPQNGQNQNQNHNHNQMIHELGSDHNKQQEDVTSQQLDLGMGLNVNNNQSNVVTPFFSSLLPVSETQQPQMSYTYSCSEVNNNGYSPPAYNTDSGKEILTNNNNVWGDQNRFLYNNNNGGGYSNQNESCHEMKSNGVMAIQSQLVNLQMVSNHQRVEEEEADHEYDELHQFLDIIDDRQSFGDSKEA</sequence>
<accession>Q9STS6</accession>
<accession>B7XG83</accession>
<evidence type="ECO:0000255" key="1">
    <source>
        <dbReference type="PROSITE-ProRule" id="PRU00291"/>
    </source>
</evidence>
<evidence type="ECO:0000305" key="2"/>